<organism>
    <name type="scientific">Mycobacterium bovis (strain ATCC BAA-935 / AF2122/97)</name>
    <dbReference type="NCBI Taxonomy" id="233413"/>
    <lineage>
        <taxon>Bacteria</taxon>
        <taxon>Bacillati</taxon>
        <taxon>Actinomycetota</taxon>
        <taxon>Actinomycetes</taxon>
        <taxon>Mycobacteriales</taxon>
        <taxon>Mycobacteriaceae</taxon>
        <taxon>Mycobacterium</taxon>
        <taxon>Mycobacterium tuberculosis complex</taxon>
    </lineage>
</organism>
<evidence type="ECO:0000269" key="1">
    <source>
    </source>
</evidence>
<evidence type="ECO:0000305" key="2"/>
<reference key="1">
    <citation type="journal article" date="2003" name="Proc. Natl. Acad. Sci. U.S.A.">
        <title>The complete genome sequence of Mycobacterium bovis.</title>
        <authorList>
            <person name="Garnier T."/>
            <person name="Eiglmeier K."/>
            <person name="Camus J.-C."/>
            <person name="Medina N."/>
            <person name="Mansoor H."/>
            <person name="Pryor M."/>
            <person name="Duthoy S."/>
            <person name="Grondin S."/>
            <person name="Lacroix C."/>
            <person name="Monsempe C."/>
            <person name="Simon S."/>
            <person name="Harris B."/>
            <person name="Atkin R."/>
            <person name="Doggett J."/>
            <person name="Mayes R."/>
            <person name="Keating L."/>
            <person name="Wheeler P.R."/>
            <person name="Parkhill J."/>
            <person name="Barrell B.G."/>
            <person name="Cole S.T."/>
            <person name="Gordon S.V."/>
            <person name="Hewinson R.G."/>
        </authorList>
    </citation>
    <scope>NUCLEOTIDE SEQUENCE [LARGE SCALE GENOMIC DNA]</scope>
    <source>
        <strain>ATCC BAA-935 / AF2122/97</strain>
    </source>
</reference>
<reference key="2">
    <citation type="journal article" date="2017" name="Genome Announc.">
        <title>Updated reference genome sequence and annotation of Mycobacterium bovis AF2122/97.</title>
        <authorList>
            <person name="Malone K.M."/>
            <person name="Farrell D."/>
            <person name="Stuber T.P."/>
            <person name="Schubert O.T."/>
            <person name="Aebersold R."/>
            <person name="Robbe-Austerman S."/>
            <person name="Gordon S.V."/>
        </authorList>
    </citation>
    <scope>NUCLEOTIDE SEQUENCE [LARGE SCALE GENOMIC DNA]</scope>
    <scope>GENOME REANNOTATION</scope>
    <source>
        <strain>ATCC BAA-935 / AF2122/97</strain>
    </source>
</reference>
<reference key="3">
    <citation type="journal article" date="2010" name="BMC Biochem.">
        <title>Biochemical characterization of the maltokinase from Mycobacterium bovis BCG.</title>
        <authorList>
            <person name="Mendes V."/>
            <person name="Maranha A."/>
            <person name="Lamosa P."/>
            <person name="da Costa M.S."/>
            <person name="Empadinhas N."/>
        </authorList>
    </citation>
    <scope>FUNCTION AS A MALTOKINASE</scope>
    <scope>CATALYTIC ACTIVITY</scope>
    <scope>SUBSTRATE SPECIFICITY</scope>
    <scope>BIOPHYSICOCHEMICAL PROPERTIES</scope>
    <scope>ACTIVITY REGULATION</scope>
    <scope>SUBUNIT</scope>
    <scope>GENE NAME</scope>
    <source>
        <strain>BCG / ATCC 27289 / DSM 43990</strain>
    </source>
</reference>
<feature type="chain" id="PRO_0000412883" description="Maltokinase">
    <location>
        <begin position="1"/>
        <end position="455"/>
    </location>
</feature>
<proteinExistence type="evidence at protein level"/>
<dbReference type="EC" id="2.7.1.175"/>
<dbReference type="EMBL" id="LT708304">
    <property type="protein sequence ID" value="SIT98554.1"/>
    <property type="molecule type" value="Genomic_DNA"/>
</dbReference>
<dbReference type="RefSeq" id="NP_853799.1">
    <property type="nucleotide sequence ID" value="NC_002945.3"/>
</dbReference>
<dbReference type="RefSeq" id="WP_003899824.1">
    <property type="nucleotide sequence ID" value="NC_002945.4"/>
</dbReference>
<dbReference type="SMR" id="Q7U2S7"/>
<dbReference type="PATRIC" id="fig|233413.5.peg.148"/>
<dbReference type="UniPathway" id="UPA00164"/>
<dbReference type="Proteomes" id="UP000001419">
    <property type="component" value="Chromosome"/>
</dbReference>
<dbReference type="GO" id="GO:0005524">
    <property type="term" value="F:ATP binding"/>
    <property type="evidence" value="ECO:0007669"/>
    <property type="project" value="UniProtKB-KW"/>
</dbReference>
<dbReference type="GO" id="GO:0016301">
    <property type="term" value="F:kinase activity"/>
    <property type="evidence" value="ECO:0007669"/>
    <property type="project" value="UniProtKB-KW"/>
</dbReference>
<dbReference type="GO" id="GO:0046835">
    <property type="term" value="P:carbohydrate phosphorylation"/>
    <property type="evidence" value="ECO:0000314"/>
    <property type="project" value="UniProtKB"/>
</dbReference>
<dbReference type="GO" id="GO:0005978">
    <property type="term" value="P:glycogen biosynthetic process"/>
    <property type="evidence" value="ECO:0007669"/>
    <property type="project" value="UniProtKB-UniPathway"/>
</dbReference>
<dbReference type="GO" id="GO:0005992">
    <property type="term" value="P:trehalose biosynthetic process"/>
    <property type="evidence" value="ECO:0000314"/>
    <property type="project" value="UniProtKB"/>
</dbReference>
<dbReference type="FunFam" id="3.90.1200.10:FF:000010">
    <property type="entry name" value="Maltokinase"/>
    <property type="match status" value="1"/>
</dbReference>
<dbReference type="Gene3D" id="3.90.1200.10">
    <property type="match status" value="1"/>
</dbReference>
<dbReference type="InterPro" id="IPR011009">
    <property type="entry name" value="Kinase-like_dom_sf"/>
</dbReference>
<dbReference type="InterPro" id="IPR040999">
    <property type="entry name" value="Mak_N_cap"/>
</dbReference>
<dbReference type="Pfam" id="PF18085">
    <property type="entry name" value="Mak_N_cap"/>
    <property type="match status" value="1"/>
</dbReference>
<dbReference type="SUPFAM" id="SSF56112">
    <property type="entry name" value="Protein kinase-like (PK-like)"/>
    <property type="match status" value="1"/>
</dbReference>
<keyword id="KW-0067">ATP-binding</keyword>
<keyword id="KW-0119">Carbohydrate metabolism</keyword>
<keyword id="KW-0320">Glycogen biosynthesis</keyword>
<keyword id="KW-0321">Glycogen metabolism</keyword>
<keyword id="KW-0418">Kinase</keyword>
<keyword id="KW-0547">Nucleotide-binding</keyword>
<keyword id="KW-1185">Reference proteome</keyword>
<keyword id="KW-0808">Transferase</keyword>
<accession>Q7U2S7</accession>
<accession>A0A1R3XUE1</accession>
<accession>X2BE38</accession>
<sequence>MTRSDTLATKLPWSDWLPRQRWYAGRNRELATVKPGVVVALRHNLDLVLVDVTYTDGATERYQVLVGWDFEPASEYGTKAAIGVADDRTGFDALYDVAGPQFLLSLIVSSAVCGTSTGEVTFTREPDVELPFAAQPRVCDAEQSNTSVIFDRRAILKVFRRVSSGINPDIELNRVLTRAGNPHVARLLGAYQFGRPNRSPTDALAYALGMVTEYEANAAEGWAMATASVRDLFAEGDLYAHEVGGDFAGESYRLGEAVASVHATLADSLGTAQATFPVDRMLARLSSTVAVVPELREYAPTIEQQFQKLAAEAITVQRVHGDLHLGQVLRTPESWLLIDFEGEPGQPLDERRAPDSPLRDVAGVLRSFEYAAYGPLVDQATDKQLAARAREWVERNRAAFCDGYAVASGIDPRDSALLLGAYELDKAVYETGYETRHRPGWLPIPLRSIARLTAS</sequence>
<gene>
    <name type="primary">mak</name>
    <name type="ordered locus">BQ2027_MB0132</name>
</gene>
<comment type="function">
    <text evidence="1">Catalyzes the ATP-dependent phosphorylation of maltose to maltose 1-phosphate. It uses ATP, GTP and UTP as phosphate donors with comparable but decreasing efficiency. Is probably involved in a branched alpha-glucan biosynthetic pathway from trehalose, together with TreS, GlgE and GlgB.</text>
</comment>
<comment type="catalytic activity">
    <reaction evidence="1">
        <text>D-maltose + ATP = alpha-maltose 1-phosphate + ADP + H(+)</text>
        <dbReference type="Rhea" id="RHEA:31915"/>
        <dbReference type="ChEBI" id="CHEBI:15378"/>
        <dbReference type="ChEBI" id="CHEBI:17306"/>
        <dbReference type="ChEBI" id="CHEBI:30616"/>
        <dbReference type="ChEBI" id="CHEBI:63576"/>
        <dbReference type="ChEBI" id="CHEBI:456216"/>
        <dbReference type="EC" id="2.7.1.175"/>
    </reaction>
</comment>
<comment type="activity regulation">
    <text evidence="1">Inhibited by glycerol and zinc ions.</text>
</comment>
<comment type="biophysicochemical properties">
    <kinetics>
        <KM evidence="1">0.74 mM for ATP (at 37 degrees Celsius and at pH 8)</KM>
        <KM evidence="1">1.01 mM for GTP (at 37 degrees Celsius and at pH 8)</KM>
        <KM evidence="1">1.3 mM for UTP (at 37 degrees Celsius and at pH 8)</KM>
        <KM evidence="1">2.52 mM for maltose (at 37 degrees Celsius and at pH 8)</KM>
        <Vmax evidence="1">21.42 umol/min/mg enzyme with ATP as substrate (at 37 degrees Celsius and at pH 8)</Vmax>
        <Vmax evidence="1">21.05 umol/min/mg enzyme with maltose as substrate (at 37 degrees Celsius and at pH 8)</Vmax>
        <Vmax evidence="1">18.65 umol/min/mg enzyme with GTP as substrate (at 37 degrees Celsius and at pH 8)</Vmax>
        <Vmax evidence="1">7.07 umol/min/mg enzyme with UTP as substrate (at 37 degrees Celsius and at pH 8)</Vmax>
    </kinetics>
    <phDependence>
        <text evidence="1">Optimum pH is between 7 and 9. The enzyme is active between pH 6 and 11.</text>
    </phDependence>
    <temperatureDependence>
        <text evidence="1">Optimum temperature is 60 degrees Celsius. The enzyme is active between 20 and 65 degrees Celsius.</text>
    </temperatureDependence>
</comment>
<comment type="pathway">
    <text>Glycan biosynthesis; glycogen biosynthesis.</text>
</comment>
<comment type="subunit">
    <text evidence="1">Monomer.</text>
</comment>
<comment type="similarity">
    <text evidence="2">Belongs to the aminoglycoside phosphotransferase family.</text>
</comment>
<protein>
    <recommendedName>
        <fullName>Maltokinase</fullName>
        <shortName>MaK</shortName>
        <ecNumber>2.7.1.175</ecNumber>
    </recommendedName>
    <alternativeName>
        <fullName>Maltose-1-phosphate synthase</fullName>
    </alternativeName>
</protein>
<name>MAK_MYCBO</name>